<proteinExistence type="evidence at transcript level"/>
<protein>
    <recommendedName>
        <fullName>Zinc finger protein 629</fullName>
    </recommendedName>
</protein>
<name>ZN629_MOUSE</name>
<accession>Q6A085</accession>
<accession>Q8BG88</accession>
<accession>Q8BIR0</accession>
<reference key="1">
    <citation type="journal article" date="2004" name="DNA Res.">
        <title>Prediction of the coding sequences of mouse homologues of KIAA gene: IV. The complete nucleotide sequences of 500 mouse KIAA-homologous cDNAs identified by screening of terminal sequences of cDNA clones randomly sampled from size-fractionated libraries.</title>
        <authorList>
            <person name="Okazaki N."/>
            <person name="Kikuno R."/>
            <person name="Ohara R."/>
            <person name="Inamoto S."/>
            <person name="Koseki H."/>
            <person name="Hiraoka S."/>
            <person name="Saga Y."/>
            <person name="Seino S."/>
            <person name="Nishimura M."/>
            <person name="Kaisho T."/>
            <person name="Hoshino K."/>
            <person name="Kitamura H."/>
            <person name="Nagase T."/>
            <person name="Ohara O."/>
            <person name="Koga H."/>
        </authorList>
    </citation>
    <scope>NUCLEOTIDE SEQUENCE [LARGE SCALE MRNA]</scope>
    <source>
        <tissue>Pancreatic islet</tissue>
    </source>
</reference>
<reference key="2">
    <citation type="journal article" date="2005" name="Science">
        <title>The transcriptional landscape of the mammalian genome.</title>
        <authorList>
            <person name="Carninci P."/>
            <person name="Kasukawa T."/>
            <person name="Katayama S."/>
            <person name="Gough J."/>
            <person name="Frith M.C."/>
            <person name="Maeda N."/>
            <person name="Oyama R."/>
            <person name="Ravasi T."/>
            <person name="Lenhard B."/>
            <person name="Wells C."/>
            <person name="Kodzius R."/>
            <person name="Shimokawa K."/>
            <person name="Bajic V.B."/>
            <person name="Brenner S.E."/>
            <person name="Batalov S."/>
            <person name="Forrest A.R."/>
            <person name="Zavolan M."/>
            <person name="Davis M.J."/>
            <person name="Wilming L.G."/>
            <person name="Aidinis V."/>
            <person name="Allen J.E."/>
            <person name="Ambesi-Impiombato A."/>
            <person name="Apweiler R."/>
            <person name="Aturaliya R.N."/>
            <person name="Bailey T.L."/>
            <person name="Bansal M."/>
            <person name="Baxter L."/>
            <person name="Beisel K.W."/>
            <person name="Bersano T."/>
            <person name="Bono H."/>
            <person name="Chalk A.M."/>
            <person name="Chiu K.P."/>
            <person name="Choudhary V."/>
            <person name="Christoffels A."/>
            <person name="Clutterbuck D.R."/>
            <person name="Crowe M.L."/>
            <person name="Dalla E."/>
            <person name="Dalrymple B.P."/>
            <person name="de Bono B."/>
            <person name="Della Gatta G."/>
            <person name="di Bernardo D."/>
            <person name="Down T."/>
            <person name="Engstrom P."/>
            <person name="Fagiolini M."/>
            <person name="Faulkner G."/>
            <person name="Fletcher C.F."/>
            <person name="Fukushima T."/>
            <person name="Furuno M."/>
            <person name="Futaki S."/>
            <person name="Gariboldi M."/>
            <person name="Georgii-Hemming P."/>
            <person name="Gingeras T.R."/>
            <person name="Gojobori T."/>
            <person name="Green R.E."/>
            <person name="Gustincich S."/>
            <person name="Harbers M."/>
            <person name="Hayashi Y."/>
            <person name="Hensch T.K."/>
            <person name="Hirokawa N."/>
            <person name="Hill D."/>
            <person name="Huminiecki L."/>
            <person name="Iacono M."/>
            <person name="Ikeo K."/>
            <person name="Iwama A."/>
            <person name="Ishikawa T."/>
            <person name="Jakt M."/>
            <person name="Kanapin A."/>
            <person name="Katoh M."/>
            <person name="Kawasawa Y."/>
            <person name="Kelso J."/>
            <person name="Kitamura H."/>
            <person name="Kitano H."/>
            <person name="Kollias G."/>
            <person name="Krishnan S.P."/>
            <person name="Kruger A."/>
            <person name="Kummerfeld S.K."/>
            <person name="Kurochkin I.V."/>
            <person name="Lareau L.F."/>
            <person name="Lazarevic D."/>
            <person name="Lipovich L."/>
            <person name="Liu J."/>
            <person name="Liuni S."/>
            <person name="McWilliam S."/>
            <person name="Madan Babu M."/>
            <person name="Madera M."/>
            <person name="Marchionni L."/>
            <person name="Matsuda H."/>
            <person name="Matsuzawa S."/>
            <person name="Miki H."/>
            <person name="Mignone F."/>
            <person name="Miyake S."/>
            <person name="Morris K."/>
            <person name="Mottagui-Tabar S."/>
            <person name="Mulder N."/>
            <person name="Nakano N."/>
            <person name="Nakauchi H."/>
            <person name="Ng P."/>
            <person name="Nilsson R."/>
            <person name="Nishiguchi S."/>
            <person name="Nishikawa S."/>
            <person name="Nori F."/>
            <person name="Ohara O."/>
            <person name="Okazaki Y."/>
            <person name="Orlando V."/>
            <person name="Pang K.C."/>
            <person name="Pavan W.J."/>
            <person name="Pavesi G."/>
            <person name="Pesole G."/>
            <person name="Petrovsky N."/>
            <person name="Piazza S."/>
            <person name="Reed J."/>
            <person name="Reid J.F."/>
            <person name="Ring B.Z."/>
            <person name="Ringwald M."/>
            <person name="Rost B."/>
            <person name="Ruan Y."/>
            <person name="Salzberg S.L."/>
            <person name="Sandelin A."/>
            <person name="Schneider C."/>
            <person name="Schoenbach C."/>
            <person name="Sekiguchi K."/>
            <person name="Semple C.A."/>
            <person name="Seno S."/>
            <person name="Sessa L."/>
            <person name="Sheng Y."/>
            <person name="Shibata Y."/>
            <person name="Shimada H."/>
            <person name="Shimada K."/>
            <person name="Silva D."/>
            <person name="Sinclair B."/>
            <person name="Sperling S."/>
            <person name="Stupka E."/>
            <person name="Sugiura K."/>
            <person name="Sultana R."/>
            <person name="Takenaka Y."/>
            <person name="Taki K."/>
            <person name="Tammoja K."/>
            <person name="Tan S.L."/>
            <person name="Tang S."/>
            <person name="Taylor M.S."/>
            <person name="Tegner J."/>
            <person name="Teichmann S.A."/>
            <person name="Ueda H.R."/>
            <person name="van Nimwegen E."/>
            <person name="Verardo R."/>
            <person name="Wei C.L."/>
            <person name="Yagi K."/>
            <person name="Yamanishi H."/>
            <person name="Zabarovsky E."/>
            <person name="Zhu S."/>
            <person name="Zimmer A."/>
            <person name="Hide W."/>
            <person name="Bult C."/>
            <person name="Grimmond S.M."/>
            <person name="Teasdale R.D."/>
            <person name="Liu E.T."/>
            <person name="Brusic V."/>
            <person name="Quackenbush J."/>
            <person name="Wahlestedt C."/>
            <person name="Mattick J.S."/>
            <person name="Hume D.A."/>
            <person name="Kai C."/>
            <person name="Sasaki D."/>
            <person name="Tomaru Y."/>
            <person name="Fukuda S."/>
            <person name="Kanamori-Katayama M."/>
            <person name="Suzuki M."/>
            <person name="Aoki J."/>
            <person name="Arakawa T."/>
            <person name="Iida J."/>
            <person name="Imamura K."/>
            <person name="Itoh M."/>
            <person name="Kato T."/>
            <person name="Kawaji H."/>
            <person name="Kawagashira N."/>
            <person name="Kawashima T."/>
            <person name="Kojima M."/>
            <person name="Kondo S."/>
            <person name="Konno H."/>
            <person name="Nakano K."/>
            <person name="Ninomiya N."/>
            <person name="Nishio T."/>
            <person name="Okada M."/>
            <person name="Plessy C."/>
            <person name="Shibata K."/>
            <person name="Shiraki T."/>
            <person name="Suzuki S."/>
            <person name="Tagami M."/>
            <person name="Waki K."/>
            <person name="Watahiki A."/>
            <person name="Okamura-Oho Y."/>
            <person name="Suzuki H."/>
            <person name="Kawai J."/>
            <person name="Hayashizaki Y."/>
        </authorList>
    </citation>
    <scope>NUCLEOTIDE SEQUENCE [LARGE SCALE MRNA]</scope>
    <source>
        <strain>C57BL/6J</strain>
        <tissue>Diencephalon</tissue>
        <tissue>Forelimb</tissue>
    </source>
</reference>
<reference key="3">
    <citation type="journal article" date="2004" name="Genome Res.">
        <title>The status, quality, and expansion of the NIH full-length cDNA project: the Mammalian Gene Collection (MGC).</title>
        <authorList>
            <consortium name="The MGC Project Team"/>
        </authorList>
    </citation>
    <scope>NUCLEOTIDE SEQUENCE [LARGE SCALE MRNA]</scope>
    <source>
        <strain>C57BL/6J</strain>
        <tissue>Brain</tissue>
        <tissue>Eye</tissue>
    </source>
</reference>
<organism>
    <name type="scientific">Mus musculus</name>
    <name type="common">Mouse</name>
    <dbReference type="NCBI Taxonomy" id="10090"/>
    <lineage>
        <taxon>Eukaryota</taxon>
        <taxon>Metazoa</taxon>
        <taxon>Chordata</taxon>
        <taxon>Craniata</taxon>
        <taxon>Vertebrata</taxon>
        <taxon>Euteleostomi</taxon>
        <taxon>Mammalia</taxon>
        <taxon>Eutheria</taxon>
        <taxon>Euarchontoglires</taxon>
        <taxon>Glires</taxon>
        <taxon>Rodentia</taxon>
        <taxon>Myomorpha</taxon>
        <taxon>Muroidea</taxon>
        <taxon>Muridae</taxon>
        <taxon>Murinae</taxon>
        <taxon>Mus</taxon>
        <taxon>Mus</taxon>
    </lineage>
</organism>
<dbReference type="EMBL" id="AK172933">
    <property type="protein sequence ID" value="BAD32211.1"/>
    <property type="status" value="ALT_INIT"/>
    <property type="molecule type" value="mRNA"/>
</dbReference>
<dbReference type="EMBL" id="AK031161">
    <property type="protein sequence ID" value="BAC27286.1"/>
    <property type="molecule type" value="mRNA"/>
</dbReference>
<dbReference type="EMBL" id="AK034484">
    <property type="protein sequence ID" value="BAC28725.1"/>
    <property type="molecule type" value="mRNA"/>
</dbReference>
<dbReference type="EMBL" id="BC035547">
    <property type="protein sequence ID" value="AAH35547.1"/>
    <property type="molecule type" value="mRNA"/>
</dbReference>
<dbReference type="EMBL" id="BC067053">
    <property type="protein sequence ID" value="AAH67053.1"/>
    <property type="molecule type" value="mRNA"/>
</dbReference>
<dbReference type="CCDS" id="CCDS21873.1"/>
<dbReference type="RefSeq" id="NP_796200.1">
    <property type="nucleotide sequence ID" value="NM_177226.5"/>
</dbReference>
<dbReference type="RefSeq" id="XP_006508016.1">
    <property type="nucleotide sequence ID" value="XM_006507953.3"/>
</dbReference>
<dbReference type="RefSeq" id="XP_011240135.1">
    <property type="nucleotide sequence ID" value="XM_011241833.2"/>
</dbReference>
<dbReference type="SMR" id="Q6A085"/>
<dbReference type="FunCoup" id="Q6A085">
    <property type="interactions" value="299"/>
</dbReference>
<dbReference type="STRING" id="10090.ENSMUSP00000053760"/>
<dbReference type="iPTMnet" id="Q6A085"/>
<dbReference type="PhosphoSitePlus" id="Q6A085"/>
<dbReference type="PaxDb" id="10090-ENSMUSP00000053760"/>
<dbReference type="PeptideAtlas" id="Q6A085"/>
<dbReference type="ProteomicsDB" id="275021"/>
<dbReference type="Pumba" id="Q6A085"/>
<dbReference type="Antibodypedia" id="7095">
    <property type="antibodies" value="12 antibodies from 7 providers"/>
</dbReference>
<dbReference type="DNASU" id="320683"/>
<dbReference type="Ensembl" id="ENSMUST00000058038.12">
    <property type="protein sequence ID" value="ENSMUSP00000053760.6"/>
    <property type="gene ID" value="ENSMUSG00000045639.15"/>
</dbReference>
<dbReference type="Ensembl" id="ENSMUST00000084564.10">
    <property type="protein sequence ID" value="ENSMUSP00000081612.4"/>
    <property type="gene ID" value="ENSMUSG00000045639.15"/>
</dbReference>
<dbReference type="Ensembl" id="ENSMUST00000122066.8">
    <property type="protein sequence ID" value="ENSMUSP00000113903.2"/>
    <property type="gene ID" value="ENSMUSG00000045639.15"/>
</dbReference>
<dbReference type="GeneID" id="320683"/>
<dbReference type="KEGG" id="mmu:320683"/>
<dbReference type="UCSC" id="uc009jwh.1">
    <property type="organism name" value="mouse"/>
</dbReference>
<dbReference type="AGR" id="MGI:2444524"/>
<dbReference type="CTD" id="320683"/>
<dbReference type="MGI" id="MGI:2444524">
    <property type="gene designation" value="Zfp629"/>
</dbReference>
<dbReference type="VEuPathDB" id="HostDB:ENSMUSG00000045639"/>
<dbReference type="eggNOG" id="KOG1721">
    <property type="taxonomic scope" value="Eukaryota"/>
</dbReference>
<dbReference type="GeneTree" id="ENSGT00940000161909"/>
<dbReference type="HOGENOM" id="CLU_014070_0_0_1"/>
<dbReference type="InParanoid" id="Q6A085"/>
<dbReference type="OMA" id="CGDSFTE"/>
<dbReference type="OrthoDB" id="654211at2759"/>
<dbReference type="PhylomeDB" id="Q6A085"/>
<dbReference type="TreeFam" id="TF350847"/>
<dbReference type="BioGRID-ORCS" id="320683">
    <property type="hits" value="1 hit in 77 CRISPR screens"/>
</dbReference>
<dbReference type="ChiTaRS" id="Zfp629">
    <property type="organism name" value="mouse"/>
</dbReference>
<dbReference type="PRO" id="PR:Q6A085"/>
<dbReference type="Proteomes" id="UP000000589">
    <property type="component" value="Chromosome 7"/>
</dbReference>
<dbReference type="RNAct" id="Q6A085">
    <property type="molecule type" value="protein"/>
</dbReference>
<dbReference type="Bgee" id="ENSMUSG00000045639">
    <property type="expression patterns" value="Expressed in dorsal pancreas and 225 other cell types or tissues"/>
</dbReference>
<dbReference type="ExpressionAtlas" id="Q6A085">
    <property type="expression patterns" value="baseline and differential"/>
</dbReference>
<dbReference type="GO" id="GO:0005634">
    <property type="term" value="C:nucleus"/>
    <property type="evidence" value="ECO:0007669"/>
    <property type="project" value="UniProtKB-SubCell"/>
</dbReference>
<dbReference type="GO" id="GO:0003677">
    <property type="term" value="F:DNA binding"/>
    <property type="evidence" value="ECO:0007669"/>
    <property type="project" value="UniProtKB-KW"/>
</dbReference>
<dbReference type="GO" id="GO:0008270">
    <property type="term" value="F:zinc ion binding"/>
    <property type="evidence" value="ECO:0007669"/>
    <property type="project" value="UniProtKB-KW"/>
</dbReference>
<dbReference type="FunFam" id="3.30.160.60:FF:002063">
    <property type="entry name" value="RB associated KRAB zinc finger"/>
    <property type="match status" value="1"/>
</dbReference>
<dbReference type="FunFam" id="3.30.160.60:FF:000269">
    <property type="entry name" value="Zinc finger protein 287"/>
    <property type="match status" value="1"/>
</dbReference>
<dbReference type="FunFam" id="3.30.160.60:FF:002254">
    <property type="entry name" value="Zinc finger protein 540"/>
    <property type="match status" value="1"/>
</dbReference>
<dbReference type="FunFam" id="3.30.160.60:FF:001767">
    <property type="entry name" value="Zinc finger protein 629"/>
    <property type="match status" value="2"/>
</dbReference>
<dbReference type="FunFam" id="3.30.160.60:FF:000431">
    <property type="entry name" value="zinc finger protein 629 isoform X2"/>
    <property type="match status" value="3"/>
</dbReference>
<dbReference type="FunFam" id="3.30.160.60:FF:000520">
    <property type="entry name" value="zinc finger protein 629 isoform X2"/>
    <property type="match status" value="1"/>
</dbReference>
<dbReference type="FunFam" id="3.30.160.60:FF:000751">
    <property type="entry name" value="zinc finger protein 629 isoform X2"/>
    <property type="match status" value="2"/>
</dbReference>
<dbReference type="FunFam" id="3.30.160.60:FF:000990">
    <property type="entry name" value="zinc finger protein 629 isoform X2"/>
    <property type="match status" value="1"/>
</dbReference>
<dbReference type="FunFam" id="3.30.160.60:FF:001090">
    <property type="entry name" value="zinc finger protein 629 isoform X2"/>
    <property type="match status" value="1"/>
</dbReference>
<dbReference type="FunFam" id="3.30.160.60:FF:001188">
    <property type="entry name" value="zinc finger protein 629 isoform X2"/>
    <property type="match status" value="1"/>
</dbReference>
<dbReference type="FunFam" id="3.30.160.60:FF:001198">
    <property type="entry name" value="zinc finger protein 629 isoform X2"/>
    <property type="match status" value="1"/>
</dbReference>
<dbReference type="FunFam" id="3.30.160.60:FF:001202">
    <property type="entry name" value="zinc finger protein 629 isoform X2"/>
    <property type="match status" value="1"/>
</dbReference>
<dbReference type="FunFam" id="3.30.160.60:FF:001827">
    <property type="entry name" value="zinc finger protein 629 isoform X2"/>
    <property type="match status" value="1"/>
</dbReference>
<dbReference type="Gene3D" id="3.30.160.60">
    <property type="entry name" value="Classic Zinc Finger"/>
    <property type="match status" value="18"/>
</dbReference>
<dbReference type="InterPro" id="IPR036236">
    <property type="entry name" value="Znf_C2H2_sf"/>
</dbReference>
<dbReference type="InterPro" id="IPR013087">
    <property type="entry name" value="Znf_C2H2_type"/>
</dbReference>
<dbReference type="PANTHER" id="PTHR24381">
    <property type="entry name" value="ZINC FINGER PROTEIN"/>
    <property type="match status" value="1"/>
</dbReference>
<dbReference type="PANTHER" id="PTHR24381:SF443">
    <property type="entry name" value="ZINC FINGER PROTEIN CKR1"/>
    <property type="match status" value="1"/>
</dbReference>
<dbReference type="Pfam" id="PF00096">
    <property type="entry name" value="zf-C2H2"/>
    <property type="match status" value="14"/>
</dbReference>
<dbReference type="SMART" id="SM00355">
    <property type="entry name" value="ZnF_C2H2"/>
    <property type="match status" value="19"/>
</dbReference>
<dbReference type="SUPFAM" id="SSF57667">
    <property type="entry name" value="beta-beta-alpha zinc fingers"/>
    <property type="match status" value="12"/>
</dbReference>
<dbReference type="PROSITE" id="PS00028">
    <property type="entry name" value="ZINC_FINGER_C2H2_1"/>
    <property type="match status" value="19"/>
</dbReference>
<dbReference type="PROSITE" id="PS50157">
    <property type="entry name" value="ZINC_FINGER_C2H2_2"/>
    <property type="match status" value="19"/>
</dbReference>
<gene>
    <name type="primary">Znf629</name>
    <name type="synonym">Kiaa0326</name>
    <name type="synonym">Zfp629</name>
</gene>
<feature type="chain" id="PRO_0000280427" description="Zinc finger protein 629">
    <location>
        <begin position="1"/>
        <end position="867"/>
    </location>
</feature>
<feature type="zinc finger region" description="C2H2-type 1" evidence="2">
    <location>
        <begin position="149"/>
        <end position="171"/>
    </location>
</feature>
<feature type="zinc finger region" description="C2H2-type 2" evidence="2">
    <location>
        <begin position="177"/>
        <end position="199"/>
    </location>
</feature>
<feature type="zinc finger region" description="C2H2-type 3" evidence="2">
    <location>
        <begin position="205"/>
        <end position="227"/>
    </location>
</feature>
<feature type="zinc finger region" description="C2H2-type 4" evidence="2">
    <location>
        <begin position="233"/>
        <end position="255"/>
    </location>
</feature>
<feature type="zinc finger region" description="C2H2-type 5" evidence="2">
    <location>
        <begin position="261"/>
        <end position="283"/>
    </location>
</feature>
<feature type="zinc finger region" description="C2H2-type 6" evidence="2">
    <location>
        <begin position="289"/>
        <end position="311"/>
    </location>
</feature>
<feature type="zinc finger region" description="C2H2-type 7" evidence="2">
    <location>
        <begin position="317"/>
        <end position="339"/>
    </location>
</feature>
<feature type="zinc finger region" description="C2H2-type 8" evidence="2">
    <location>
        <begin position="345"/>
        <end position="367"/>
    </location>
</feature>
<feature type="zinc finger region" description="C2H2-type 9" evidence="2">
    <location>
        <begin position="373"/>
        <end position="395"/>
    </location>
</feature>
<feature type="zinc finger region" description="C2H2-type 10" evidence="2">
    <location>
        <begin position="401"/>
        <end position="423"/>
    </location>
</feature>
<feature type="zinc finger region" description="C2H2-type 11" evidence="2">
    <location>
        <begin position="429"/>
        <end position="451"/>
    </location>
</feature>
<feature type="zinc finger region" description="C2H2-type 12" evidence="2">
    <location>
        <begin position="457"/>
        <end position="479"/>
    </location>
</feature>
<feature type="zinc finger region" description="C2H2-type 13" evidence="2">
    <location>
        <begin position="485"/>
        <end position="507"/>
    </location>
</feature>
<feature type="zinc finger region" description="C2H2-type 14" evidence="2">
    <location>
        <begin position="513"/>
        <end position="535"/>
    </location>
</feature>
<feature type="zinc finger region" description="C2H2-type 15" evidence="2">
    <location>
        <begin position="568"/>
        <end position="590"/>
    </location>
</feature>
<feature type="zinc finger region" description="C2H2-type 16" evidence="2">
    <location>
        <begin position="661"/>
        <end position="683"/>
    </location>
</feature>
<feature type="zinc finger region" description="C2H2-type 17" evidence="2">
    <location>
        <begin position="713"/>
        <end position="735"/>
    </location>
</feature>
<feature type="zinc finger region" description="C2H2-type 18" evidence="2">
    <location>
        <begin position="766"/>
        <end position="788"/>
    </location>
</feature>
<feature type="zinc finger region" description="C2H2-type 19" evidence="2">
    <location>
        <begin position="840"/>
        <end position="862"/>
    </location>
</feature>
<feature type="region of interest" description="Disordered" evidence="3">
    <location>
        <begin position="1"/>
        <end position="104"/>
    </location>
</feature>
<feature type="region of interest" description="Disordered" evidence="3">
    <location>
        <begin position="596"/>
        <end position="656"/>
    </location>
</feature>
<feature type="region of interest" description="Disordered" evidence="3">
    <location>
        <begin position="786"/>
        <end position="839"/>
    </location>
</feature>
<feature type="compositionally biased region" description="Polar residues" evidence="3">
    <location>
        <begin position="65"/>
        <end position="81"/>
    </location>
</feature>
<feature type="compositionally biased region" description="Low complexity" evidence="3">
    <location>
        <begin position="94"/>
        <end position="104"/>
    </location>
</feature>
<feature type="compositionally biased region" description="Basic and acidic residues" evidence="3">
    <location>
        <begin position="786"/>
        <end position="795"/>
    </location>
</feature>
<feature type="compositionally biased region" description="Polar residues" evidence="3">
    <location>
        <begin position="796"/>
        <end position="809"/>
    </location>
</feature>
<feature type="compositionally biased region" description="Basic and acidic residues" evidence="3">
    <location>
        <begin position="824"/>
        <end position="839"/>
    </location>
</feature>
<feature type="modified residue" description="Phosphoserine" evidence="1">
    <location>
        <position position="18"/>
    </location>
</feature>
<feature type="cross-link" description="Glycyl lysine isopeptide (Lys-Gly) (interchain with G-Cter in SUMO2)" evidence="1">
    <location>
        <position position="250"/>
    </location>
</feature>
<feature type="cross-link" description="Glycyl lysine isopeptide (Lys-Gly) (interchain with G-Cter in SUMO2)" evidence="1">
    <location>
        <position position="687"/>
    </location>
</feature>
<feature type="cross-link" description="Glycyl lysine isopeptide (Lys-Gly) (interchain with G-Cter in SUMO2)" evidence="1">
    <location>
        <position position="748"/>
    </location>
</feature>
<feature type="cross-link" description="Glycyl lysine isopeptide (Lys-Gly) (interchain with G-Cter in SUMO2)" evidence="1">
    <location>
        <position position="838"/>
    </location>
</feature>
<feature type="sequence conflict" description="In Ref. 2; BAC27286." evidence="4" ref="2">
    <original>C</original>
    <variation>Y</variation>
    <location>
        <position position="319"/>
    </location>
</feature>
<feature type="sequence conflict" description="In Ref. 2; BAC27286." evidence="4" ref="2">
    <original>S</original>
    <variation>R</variation>
    <location>
        <position position="385"/>
    </location>
</feature>
<feature type="sequence conflict" description="In Ref. 2; BAC27286." evidence="4" ref="2">
    <original>A</original>
    <variation>D</variation>
    <location>
        <position position="545"/>
    </location>
</feature>
<comment type="function">
    <text>May be involved in transcriptional regulation.</text>
</comment>
<comment type="subcellular location">
    <subcellularLocation>
        <location evidence="4">Nucleus</location>
    </subcellularLocation>
</comment>
<comment type="similarity">
    <text evidence="4">Belongs to the krueppel C2H2-type zinc-finger protein family.</text>
</comment>
<comment type="sequence caution" evidence="4">
    <conflict type="erroneous initiation">
        <sequence resource="EMBL-CDS" id="BAD32211"/>
    </conflict>
</comment>
<keyword id="KW-0238">DNA-binding</keyword>
<keyword id="KW-1017">Isopeptide bond</keyword>
<keyword id="KW-0479">Metal-binding</keyword>
<keyword id="KW-0539">Nucleus</keyword>
<keyword id="KW-0597">Phosphoprotein</keyword>
<keyword id="KW-1185">Reference proteome</keyword>
<keyword id="KW-0677">Repeat</keyword>
<keyword id="KW-0804">Transcription</keyword>
<keyword id="KW-0805">Transcription regulation</keyword>
<keyword id="KW-0832">Ubl conjugation</keyword>
<keyword id="KW-0862">Zinc</keyword>
<keyword id="KW-0863">Zinc-finger</keyword>
<sequence>MEPETVLWGPDLQGPEESQNEAHRGAGSGNEEESPQQESSGEEIILGDPAQSPESKDPSEMPLESPSQDASAPQDSPTPLGSSPLDHQTPMDPSAPEVVPSPSEWTKACETNWQWGTLTPWNSTPVVTASEPSLRELVQGRPSGAEKPYICNECGKSFSQWSKLLRHQRIHTGERPNTCSECGKSFTQSSHLVQHQRTHTGEKPYKCPDCGKCFSWSSNLVQHQRTHTGEKPYKCTECEKAFTQSTNLIKHQRSHTGEKPYKCGECRRAFYRSSDLIQHQATHTGEKPYKCPECGKRFGQNHNLLKHQKIHAGEKPYRCTECGKSFIQSSELTQHQRTHTGEKPYECLECGKSFGHSSTLIKHQRTHLREDPFKCPVCGKTFTLSATLLRHQRTHTGERPYKCPECGKSFSVSSNLINHQRIHRGERPYICADCGKSFIMSSTLIRHQRIHTGEKPYKCSDCGKSFIRSSHLIQHRRTHTGEKPYKCPECGKSFSQSSNLITHVRTHMDENLFVCSDCGKAFLEAQELEQHRVIHERGKTPARRAQGDSLLGFGDPALMTPPPGAKPHKCLVCGKGFNDEGIFMQHQRIHIGENPYKNADGLITHPAPKPQQLRPSRLPFGGNSHPGASESRADPPGQPSKVPESQEGSGQRPGQPSPKCYVCSHCGESFLDRAVLLQHQLTHGNEKPFLFPECRTGRGEGAGPSPFLNAKPFKCPECKKSFGLSSELLQHQKVHAGGKSQKSSELGKSSSVLLEHLRSPLGARPYSCSDCGASFLDRLALTRHQETHTHERASTPEDTPSESATLSTNQEDEGEASTPPKSSSHGEEESPKTVSEKKPFLCPECGDGFTEVATLLLHRSCHPGVSL</sequence>
<evidence type="ECO:0000250" key="1">
    <source>
        <dbReference type="UniProtKB" id="Q9UEG4"/>
    </source>
</evidence>
<evidence type="ECO:0000255" key="2">
    <source>
        <dbReference type="PROSITE-ProRule" id="PRU00042"/>
    </source>
</evidence>
<evidence type="ECO:0000256" key="3">
    <source>
        <dbReference type="SAM" id="MobiDB-lite"/>
    </source>
</evidence>
<evidence type="ECO:0000305" key="4"/>